<feature type="chain" id="PRO_0000133572" description="Minor capsid protein L2">
    <location>
        <begin position="1"/>
        <end position="459"/>
    </location>
</feature>
<feature type="short sequence motif" description="Nuclear localization signal" evidence="1">
    <location>
        <begin position="1"/>
        <end position="12"/>
    </location>
</feature>
<feature type="short sequence motif" description="Nuclear localization signal" evidence="1">
    <location>
        <begin position="442"/>
        <end position="450"/>
    </location>
</feature>
<feature type="disulfide bond" evidence="1">
    <location>
        <begin position="21"/>
        <end position="27"/>
    </location>
</feature>
<protein>
    <recommendedName>
        <fullName evidence="1">Minor capsid protein L2</fullName>
    </recommendedName>
</protein>
<organismHost>
    <name type="scientific">Homo sapiens</name>
    <name type="common">Human</name>
    <dbReference type="NCBI Taxonomy" id="9606"/>
</organismHost>
<evidence type="ECO:0000255" key="1">
    <source>
        <dbReference type="HAMAP-Rule" id="MF_04003"/>
    </source>
</evidence>
<sequence length="459" mass="49407">MAHSRARRRKRASATQLYQTCKLTGTCPPDVIPKVEHNTIADQILKWGSLGVFFGGLGIGTGSGTGGRTGYVPLGTSAKPSITSGPMARPPVVVEPVAPSDPSIVSLIEESAIINAGAPEIVPPAHGGFTITSSETTTPAILDVSVTSHTTTSIFRNPVFTEPSVTQPQPPVEANGHILISAPTITSHPIEEIPLDTFVISSSDSGPTSSTPVPGTAPRPRVGLYSRALHQVQVTDPAFLSTPQRLITYDNPVYEGEDVSVQFSHDSIHNAPDEAFMDIIRLHRPAIASRRGLVRYSRIGQRGSMHTRSGKHIGARIHYFYDISPIAQAAEEIEMHPLVAAQDDTFDIYAESFEPDINPTQHPVTNISDTYLTSTPNTVTQPWGNTTVPLSIPNDLFLQSGPDITFPTAPMGTPFSPVTPALPTGPVFITGSGFYLHPAWYFARKRRKRIPLFFSDVAA</sequence>
<proteinExistence type="inferred from homology"/>
<organism>
    <name type="scientific">Human papillomavirus type 6a</name>
    <dbReference type="NCBI Taxonomy" id="37122"/>
    <lineage>
        <taxon>Viruses</taxon>
        <taxon>Monodnaviria</taxon>
        <taxon>Shotokuvirae</taxon>
        <taxon>Cossaviricota</taxon>
        <taxon>Papovaviricetes</taxon>
        <taxon>Zurhausenvirales</taxon>
        <taxon>Papillomaviridae</taxon>
        <taxon>Firstpapillomavirinae</taxon>
        <taxon>Alphapapillomavirus</taxon>
        <taxon>Alphapapillomavirus 10</taxon>
    </lineage>
</organism>
<reference key="1">
    <citation type="journal article" date="1995" name="Virology">
        <title>Sequence determination of human papillomavirus type 6a and assembly of virus-like particles in Saccharomyces cerevisiae.</title>
        <authorList>
            <person name="Hofmann K.J."/>
            <person name="Cook J.C."/>
            <person name="Joyce J.G."/>
            <person name="Brown D.R."/>
            <person name="Schultz L.D."/>
            <person name="George H.A."/>
            <person name="Rosolowsky M."/>
            <person name="Fife K.H."/>
            <person name="Jansen K.U."/>
        </authorList>
    </citation>
    <scope>NUCLEOTIDE SEQUENCE [GENOMIC DNA]</scope>
</reference>
<keyword id="KW-0167">Capsid protein</keyword>
<keyword id="KW-1176">Cytoplasmic inwards viral transport</keyword>
<keyword id="KW-1015">Disulfide bond</keyword>
<keyword id="KW-0238">DNA-binding</keyword>
<keyword id="KW-1039">Host endosome</keyword>
<keyword id="KW-1040">Host Golgi apparatus</keyword>
<keyword id="KW-1048">Host nucleus</keyword>
<keyword id="KW-0945">Host-virus interaction</keyword>
<keyword id="KW-0426">Late protein</keyword>
<keyword id="KW-1177">Microtubular inwards viral transport</keyword>
<keyword id="KW-0597">Phosphoprotein</keyword>
<keyword id="KW-1163">Viral penetration into host nucleus</keyword>
<keyword id="KW-0946">Virion</keyword>
<keyword id="KW-1160">Virus entry into host cell</keyword>
<name>VL2_HPV6A</name>
<comment type="function">
    <text evidence="1">Minor protein of the capsid that localizes along the inner surface of the virion, within the central cavities beneath the L1 pentamers. Plays a role in capsid stabilization through interaction with the major capsid protein L1. Once the virion enters the host cell, L2 escorts the genomic DNA into the nucleus by promoting escape from the endosomal compartments and traffic through the host Golgi network. Mechanistically, the C-terminus of L2 possesses a cell-penetrating peptide that protudes from the host endosome, interacts with host cytoplasmic retromer cargo and thereby mediates the capsid delivery to the host trans-Golgi network. Plays a role through its interaction with host dynein in the intracellular microtubule-dependent transport of viral capsid toward the nucleus. Mediates the viral genome import into the nucleus through binding to host importins. Once within the nucleus, L2 localizes viral genomes to host PML bodies in order to activate early gene expression for establishment of infection. Later on, promotes late gene expression by interacting with the viral E2 protein and by inhibiting its transcriptional activation functions. During virion assembly, encapsidates the genome by direct interaction with the viral DNA.</text>
</comment>
<comment type="subunit">
    <text evidence="1">Interacts with major capsid protein L1. Interacts with E2; this interaction inhibits E2 transcriptional activity but not the DNA replication function E2. Interacts with host GADD45GIP1. Interacts with host HSPA8; this interaction is required for L2 nuclear translocation. Interacts with host importins KPNB2 and KPNB3. Forms a complex with importin alpha2-beta1 heterodimers via interaction with the importin alpha2 adapter. Interacts with host DYNLT1; this interaction is essential for virus intracellular transport during entry. Interacts (via C-terminus) with host retromer subunits VPS35 and VPS29.</text>
</comment>
<comment type="subcellular location">
    <subcellularLocation>
        <location evidence="1">Virion</location>
    </subcellularLocation>
    <subcellularLocation>
        <location evidence="1">Host nucleus</location>
    </subcellularLocation>
    <subcellularLocation>
        <location evidence="1">Host early endosome</location>
    </subcellularLocation>
    <subcellularLocation>
        <location evidence="1">Host Golgi apparatus</location>
    </subcellularLocation>
</comment>
<comment type="PTM">
    <text evidence="1">Highly phosphorylated.</text>
</comment>
<comment type="similarity">
    <text evidence="1">Belongs to the papillomaviridae L2 protein family.</text>
</comment>
<accession>Q84297</accession>
<gene>
    <name evidence="1" type="primary">L2</name>
</gene>
<dbReference type="EMBL" id="L41216">
    <property type="protein sequence ID" value="AAA74217.1"/>
    <property type="molecule type" value="Genomic_DNA"/>
</dbReference>
<dbReference type="Proteomes" id="UP000007675">
    <property type="component" value="Genome"/>
</dbReference>
<dbReference type="GO" id="GO:0043657">
    <property type="term" value="C:host cell"/>
    <property type="evidence" value="ECO:0007669"/>
    <property type="project" value="GOC"/>
</dbReference>
<dbReference type="GO" id="GO:0044174">
    <property type="term" value="C:host cell endosome"/>
    <property type="evidence" value="ECO:0007669"/>
    <property type="project" value="UniProtKB-KW"/>
</dbReference>
<dbReference type="GO" id="GO:0044177">
    <property type="term" value="C:host cell Golgi apparatus"/>
    <property type="evidence" value="ECO:0007669"/>
    <property type="project" value="UniProtKB-SubCell"/>
</dbReference>
<dbReference type="GO" id="GO:0042025">
    <property type="term" value="C:host cell nucleus"/>
    <property type="evidence" value="ECO:0007669"/>
    <property type="project" value="UniProtKB-SubCell"/>
</dbReference>
<dbReference type="GO" id="GO:0019028">
    <property type="term" value="C:viral capsid"/>
    <property type="evidence" value="ECO:0007669"/>
    <property type="project" value="UniProtKB-UniRule"/>
</dbReference>
<dbReference type="GO" id="GO:0003677">
    <property type="term" value="F:DNA binding"/>
    <property type="evidence" value="ECO:0007669"/>
    <property type="project" value="UniProtKB-UniRule"/>
</dbReference>
<dbReference type="GO" id="GO:0005198">
    <property type="term" value="F:structural molecule activity"/>
    <property type="evidence" value="ECO:0007669"/>
    <property type="project" value="UniProtKB-UniRule"/>
</dbReference>
<dbReference type="GO" id="GO:0075521">
    <property type="term" value="P:microtubule-dependent intracellular transport of viral material towards nucleus"/>
    <property type="evidence" value="ECO:0007669"/>
    <property type="project" value="UniProtKB-UniRule"/>
</dbReference>
<dbReference type="GO" id="GO:0046718">
    <property type="term" value="P:symbiont entry into host cell"/>
    <property type="evidence" value="ECO:0007669"/>
    <property type="project" value="UniProtKB-KW"/>
</dbReference>
<dbReference type="GO" id="GO:0075732">
    <property type="term" value="P:viral penetration into host nucleus"/>
    <property type="evidence" value="ECO:0007669"/>
    <property type="project" value="UniProtKB-KW"/>
</dbReference>
<dbReference type="HAMAP" id="MF_04003">
    <property type="entry name" value="PPV_L2"/>
    <property type="match status" value="1"/>
</dbReference>
<dbReference type="InterPro" id="IPR000784">
    <property type="entry name" value="Late_L2"/>
</dbReference>
<dbReference type="Pfam" id="PF00513">
    <property type="entry name" value="Late_protein_L2"/>
    <property type="match status" value="1"/>
</dbReference>